<keyword id="KW-0963">Cytoplasm</keyword>
<keyword id="KW-0229">DNA integration</keyword>
<keyword id="KW-0233">DNA recombination</keyword>
<keyword id="KW-0238">DNA-binding</keyword>
<keyword id="KW-1185">Reference proteome</keyword>
<feature type="chain" id="PRO_0000355197" description="Tyrosine recombinase XerD-like">
    <location>
        <begin position="1"/>
        <end position="253"/>
    </location>
</feature>
<feature type="domain" description="Core-binding (CB)" evidence="3">
    <location>
        <begin position="8"/>
        <end position="81"/>
    </location>
</feature>
<feature type="domain" description="Tyr recombinase" evidence="2">
    <location>
        <begin position="93"/>
        <end position="253"/>
    </location>
</feature>
<feature type="active site" evidence="2">
    <location>
        <position position="157"/>
    </location>
</feature>
<feature type="active site" evidence="2">
    <location>
        <position position="218"/>
    </location>
</feature>
<feature type="active site" description="O-(3'-phospho-DNA)-tyrosine intermediate" evidence="2">
    <location>
        <position position="250"/>
    </location>
</feature>
<accession>Q5M623</accession>
<protein>
    <recommendedName>
        <fullName evidence="1">Tyrosine recombinase XerD-like</fullName>
    </recommendedName>
</protein>
<sequence>MTISSFQKQLTTQITNFLARKTISDSSKQAYAYDLKQFVNCLPGRVDQTSLKLYENQLKEWKPSVQKRKRSAVNQFLLYLYQKGELEEFFKLSETAPLPSQQEELEIFDLSSLYEGQEGPGKLACLFILELGLLPSEILELKWEDIDLDFGVVTVAKGSTKRVLRLDGALKELLFGIKNDNSQGLILSKAFTRQWLYKQIQSYVGGCGLSGVTAQALRQQYILRQIEKGTGAFELARLLGLKSPVTLEKYYKT</sequence>
<evidence type="ECO:0000255" key="1">
    <source>
        <dbReference type="HAMAP-Rule" id="MF_01817"/>
    </source>
</evidence>
<evidence type="ECO:0000255" key="2">
    <source>
        <dbReference type="PROSITE-ProRule" id="PRU01246"/>
    </source>
</evidence>
<evidence type="ECO:0000255" key="3">
    <source>
        <dbReference type="PROSITE-ProRule" id="PRU01248"/>
    </source>
</evidence>
<name>XERDL_STRT2</name>
<reference key="1">
    <citation type="journal article" date="2004" name="Nat. Biotechnol.">
        <title>Complete sequence and comparative genome analysis of the dairy bacterium Streptococcus thermophilus.</title>
        <authorList>
            <person name="Bolotin A."/>
            <person name="Quinquis B."/>
            <person name="Renault P."/>
            <person name="Sorokin A."/>
            <person name="Ehrlich S.D."/>
            <person name="Kulakauskas S."/>
            <person name="Lapidus A."/>
            <person name="Goltsman E."/>
            <person name="Mazur M."/>
            <person name="Pusch G.D."/>
            <person name="Fonstein M."/>
            <person name="Overbeek R."/>
            <person name="Kyprides N."/>
            <person name="Purnelle B."/>
            <person name="Prozzi D."/>
            <person name="Ngui K."/>
            <person name="Masuy D."/>
            <person name="Hancy F."/>
            <person name="Burteau S."/>
            <person name="Boutry M."/>
            <person name="Delcour J."/>
            <person name="Goffeau A."/>
            <person name="Hols P."/>
        </authorList>
    </citation>
    <scope>NUCLEOTIDE SEQUENCE [LARGE SCALE GENOMIC DNA]</scope>
    <source>
        <strain>ATCC BAA-250 / LMG 18311</strain>
    </source>
</reference>
<organism>
    <name type="scientific">Streptococcus thermophilus (strain ATCC BAA-250 / LMG 18311)</name>
    <dbReference type="NCBI Taxonomy" id="264199"/>
    <lineage>
        <taxon>Bacteria</taxon>
        <taxon>Bacillati</taxon>
        <taxon>Bacillota</taxon>
        <taxon>Bacilli</taxon>
        <taxon>Lactobacillales</taxon>
        <taxon>Streptococcaceae</taxon>
        <taxon>Streptococcus</taxon>
    </lineage>
</organism>
<gene>
    <name type="ordered locus">stu0259</name>
</gene>
<proteinExistence type="inferred from homology"/>
<comment type="function">
    <text evidence="1">Putative tyrosine recombinase. Not involved in the cutting and rejoining of the recombining DNA molecules on dif(SL) site.</text>
</comment>
<comment type="subcellular location">
    <subcellularLocation>
        <location evidence="1">Cytoplasm</location>
    </subcellularLocation>
</comment>
<comment type="similarity">
    <text evidence="1">Belongs to the 'phage' integrase family. XerD-like subfamily.</text>
</comment>
<dbReference type="EMBL" id="CP000023">
    <property type="protein sequence ID" value="AAV59983.1"/>
    <property type="molecule type" value="Genomic_DNA"/>
</dbReference>
<dbReference type="SMR" id="Q5M623"/>
<dbReference type="STRING" id="264199.stu0259"/>
<dbReference type="KEGG" id="stl:stu0259"/>
<dbReference type="eggNOG" id="COG4974">
    <property type="taxonomic scope" value="Bacteria"/>
</dbReference>
<dbReference type="HOGENOM" id="CLU_1128554_0_0_9"/>
<dbReference type="Proteomes" id="UP000001170">
    <property type="component" value="Chromosome"/>
</dbReference>
<dbReference type="GO" id="GO:0005737">
    <property type="term" value="C:cytoplasm"/>
    <property type="evidence" value="ECO:0007669"/>
    <property type="project" value="UniProtKB-SubCell"/>
</dbReference>
<dbReference type="GO" id="GO:0003677">
    <property type="term" value="F:DNA binding"/>
    <property type="evidence" value="ECO:0007669"/>
    <property type="project" value="UniProtKB-KW"/>
</dbReference>
<dbReference type="GO" id="GO:0009037">
    <property type="term" value="F:tyrosine-based site-specific recombinase activity"/>
    <property type="evidence" value="ECO:0007669"/>
    <property type="project" value="UniProtKB-UniRule"/>
</dbReference>
<dbReference type="GO" id="GO:0006313">
    <property type="term" value="P:DNA transposition"/>
    <property type="evidence" value="ECO:0007669"/>
    <property type="project" value="UniProtKB-UniRule"/>
</dbReference>
<dbReference type="CDD" id="cd01190">
    <property type="entry name" value="INT_StrepXerD_C_like"/>
    <property type="match status" value="1"/>
</dbReference>
<dbReference type="Gene3D" id="1.10.150.130">
    <property type="match status" value="1"/>
</dbReference>
<dbReference type="Gene3D" id="1.10.443.10">
    <property type="entry name" value="Intergrase catalytic core"/>
    <property type="match status" value="1"/>
</dbReference>
<dbReference type="HAMAP" id="MF_01817">
    <property type="entry name" value="Recomb_XerD_like"/>
    <property type="match status" value="1"/>
</dbReference>
<dbReference type="InterPro" id="IPR044068">
    <property type="entry name" value="CB"/>
</dbReference>
<dbReference type="InterPro" id="IPR011010">
    <property type="entry name" value="DNA_brk_join_enz"/>
</dbReference>
<dbReference type="InterPro" id="IPR013762">
    <property type="entry name" value="Integrase-like_cat_sf"/>
</dbReference>
<dbReference type="InterPro" id="IPR002104">
    <property type="entry name" value="Integrase_catalytic"/>
</dbReference>
<dbReference type="InterPro" id="IPR010998">
    <property type="entry name" value="Integrase_recombinase_N"/>
</dbReference>
<dbReference type="InterPro" id="IPR020876">
    <property type="entry name" value="Tyrosine_recombinase_XerD-like"/>
</dbReference>
<dbReference type="NCBIfam" id="NF002685">
    <property type="entry name" value="PRK02436.1"/>
    <property type="match status" value="1"/>
</dbReference>
<dbReference type="Pfam" id="PF00589">
    <property type="entry name" value="Phage_integrase"/>
    <property type="match status" value="1"/>
</dbReference>
<dbReference type="SUPFAM" id="SSF56349">
    <property type="entry name" value="DNA breaking-rejoining enzymes"/>
    <property type="match status" value="1"/>
</dbReference>
<dbReference type="PROSITE" id="PS51900">
    <property type="entry name" value="CB"/>
    <property type="match status" value="1"/>
</dbReference>
<dbReference type="PROSITE" id="PS51898">
    <property type="entry name" value="TYR_RECOMBINASE"/>
    <property type="match status" value="1"/>
</dbReference>